<keyword id="KW-0973">c-di-GMP</keyword>
<keyword id="KW-0378">Hydrolase</keyword>
<keyword id="KW-0479">Metal-binding</keyword>
<keyword id="KW-0597">Phosphoprotein</keyword>
<keyword id="KW-1185">Reference proteome</keyword>
<gene>
    <name evidence="5" type="ordered locus">TM_0186</name>
    <name evidence="6" type="ORF">Tmari_0184</name>
</gene>
<proteinExistence type="evidence at protein level"/>
<protein>
    <recommendedName>
        <fullName>Cyclic di-GMP phosphodiesterase TM_0186</fullName>
        <ecNumber evidence="4">3.1.4.-</ecNumber>
    </recommendedName>
</protein>
<accession>Q9WY30</accession>
<accession>G4FHA0</accession>
<accession>R4NN00</accession>
<feature type="chain" id="PRO_0000440638" description="Cyclic di-GMP phosphodiesterase TM_0186">
    <location>
        <begin position="1"/>
        <end position="368"/>
    </location>
</feature>
<feature type="domain" description="Response regulatory" evidence="1">
    <location>
        <begin position="2"/>
        <end position="114"/>
    </location>
</feature>
<feature type="domain" description="HD-GYP" evidence="2">
    <location>
        <begin position="148"/>
        <end position="345"/>
    </location>
</feature>
<feature type="region of interest" description="Disordered" evidence="3">
    <location>
        <begin position="341"/>
        <end position="368"/>
    </location>
</feature>
<feature type="compositionally biased region" description="Polar residues" evidence="3">
    <location>
        <begin position="350"/>
        <end position="360"/>
    </location>
</feature>
<feature type="binding site" evidence="4">
    <location>
        <position position="169"/>
    </location>
    <ligand>
        <name>a divalent metal cation</name>
        <dbReference type="ChEBI" id="CHEBI:60240"/>
        <label>2</label>
    </ligand>
</feature>
<feature type="binding site" evidence="4">
    <location>
        <position position="169"/>
    </location>
    <ligand>
        <name>a divalent metal cation</name>
        <dbReference type="ChEBI" id="CHEBI:60240"/>
        <label>3</label>
    </ligand>
</feature>
<feature type="binding site" evidence="4">
    <location>
        <position position="173"/>
    </location>
    <ligand>
        <name>a divalent metal cation</name>
        <dbReference type="ChEBI" id="CHEBI:60240"/>
        <label>3</label>
    </ligand>
</feature>
<feature type="binding site" evidence="4">
    <location>
        <position position="205"/>
    </location>
    <ligand>
        <name>a divalent metal cation</name>
        <dbReference type="ChEBI" id="CHEBI:60240"/>
        <label>2</label>
    </ligand>
</feature>
<feature type="binding site" evidence="4">
    <location>
        <position position="206"/>
    </location>
    <ligand>
        <name>a divalent metal cation</name>
        <dbReference type="ChEBI" id="CHEBI:60240"/>
        <label>1</label>
    </ligand>
</feature>
<feature type="binding site" evidence="4">
    <location>
        <position position="206"/>
    </location>
    <ligand>
        <name>a divalent metal cation</name>
        <dbReference type="ChEBI" id="CHEBI:60240"/>
        <label>2</label>
    </ligand>
</feature>
<feature type="binding site" evidence="4">
    <location>
        <position position="234"/>
    </location>
    <ligand>
        <name>a divalent metal cation</name>
        <dbReference type="ChEBI" id="CHEBI:60240"/>
        <label>1</label>
    </ligand>
</feature>
<feature type="binding site" evidence="4">
    <location>
        <position position="260"/>
    </location>
    <ligand>
        <name>a divalent metal cation</name>
        <dbReference type="ChEBI" id="CHEBI:60240"/>
        <label>1</label>
    </ligand>
</feature>
<feature type="binding site" evidence="4">
    <location>
        <position position="261"/>
    </location>
    <ligand>
        <name>a divalent metal cation</name>
        <dbReference type="ChEBI" id="CHEBI:60240"/>
        <label>1</label>
    </ligand>
</feature>
<feature type="binding site" evidence="4">
    <location>
        <position position="289"/>
    </location>
    <ligand>
        <name>a divalent metal cation</name>
        <dbReference type="ChEBI" id="CHEBI:60240"/>
        <label>3</label>
    </ligand>
</feature>
<feature type="modified residue" description="4-aspartylphosphate" evidence="1">
    <location>
        <position position="49"/>
    </location>
</feature>
<feature type="mutagenesis site" description="Can form pGpG but not GMP." evidence="4">
    <original>E</original>
    <variation>A</variation>
    <location>
        <position position="169"/>
    </location>
</feature>
<feature type="mutagenesis site" description="Lack of activity." evidence="4">
    <original>H</original>
    <variation>A</variation>
    <location>
        <position position="173"/>
    </location>
</feature>
<feature type="mutagenesis site" description="Lack of activity." evidence="4">
    <original>D</original>
    <variation>A</variation>
    <location>
        <position position="289"/>
    </location>
</feature>
<reference key="1">
    <citation type="journal article" date="1999" name="Nature">
        <title>Evidence for lateral gene transfer between Archaea and Bacteria from genome sequence of Thermotoga maritima.</title>
        <authorList>
            <person name="Nelson K.E."/>
            <person name="Clayton R.A."/>
            <person name="Gill S.R."/>
            <person name="Gwinn M.L."/>
            <person name="Dodson R.J."/>
            <person name="Haft D.H."/>
            <person name="Hickey E.K."/>
            <person name="Peterson J.D."/>
            <person name="Nelson W.C."/>
            <person name="Ketchum K.A."/>
            <person name="McDonald L.A."/>
            <person name="Utterback T.R."/>
            <person name="Malek J.A."/>
            <person name="Linher K.D."/>
            <person name="Garrett M.M."/>
            <person name="Stewart A.M."/>
            <person name="Cotton M.D."/>
            <person name="Pratt M.S."/>
            <person name="Phillips C.A."/>
            <person name="Richardson D.L."/>
            <person name="Heidelberg J.F."/>
            <person name="Sutton G.G."/>
            <person name="Fleischmann R.D."/>
            <person name="Eisen J.A."/>
            <person name="White O."/>
            <person name="Salzberg S.L."/>
            <person name="Smith H.O."/>
            <person name="Venter J.C."/>
            <person name="Fraser C.M."/>
        </authorList>
    </citation>
    <scope>NUCLEOTIDE SEQUENCE [LARGE SCALE GENOMIC DNA]</scope>
    <source>
        <strain>ATCC 43589 / DSM 3109 / JCM 10099 / NBRC 100826 / MSB8</strain>
    </source>
</reference>
<reference key="2">
    <citation type="journal article" date="2013" name="PLoS Genet.">
        <title>The genome organization of Thermotoga maritima reflects its lifestyle.</title>
        <authorList>
            <person name="Latif H."/>
            <person name="Lerman J.A."/>
            <person name="Portnoy V.A."/>
            <person name="Tarasova Y."/>
            <person name="Nagarajan H."/>
            <person name="Schrimpe-Rutledge A.C."/>
            <person name="Smith R.D."/>
            <person name="Adkins J.N."/>
            <person name="Lee D.H."/>
            <person name="Qiu Y."/>
            <person name="Zengler K."/>
        </authorList>
    </citation>
    <scope>NUCLEOTIDE SEQUENCE [LARGE SCALE GENOMIC DNA]</scope>
    <source>
        <strain>ATCC 43589 / DSM 3109 / JCM 10099 / NBRC 100826 / MSB8</strain>
    </source>
</reference>
<reference key="3">
    <citation type="journal article" date="2016" name="Biochemistry">
        <title>Active site metal occupancy and cyclic di-GMP phosphodiesterase activity of Thermotoga maritima HD-GYP.</title>
        <authorList>
            <person name="Miner K.D."/>
            <person name="Kurtz D.M. Jr."/>
        </authorList>
    </citation>
    <scope>FUNCTION</scope>
    <scope>CATALYTIC ACTIVITY</scope>
    <scope>ACTIVITY REGULATION</scope>
    <scope>MUTAGENESIS OF GLU-169; HIS-173 AND ASP-289</scope>
</reference>
<evidence type="ECO:0000255" key="1">
    <source>
        <dbReference type="PROSITE-ProRule" id="PRU00169"/>
    </source>
</evidence>
<evidence type="ECO:0000255" key="2">
    <source>
        <dbReference type="PROSITE-ProRule" id="PRU01176"/>
    </source>
</evidence>
<evidence type="ECO:0000256" key="3">
    <source>
        <dbReference type="SAM" id="MobiDB-lite"/>
    </source>
</evidence>
<evidence type="ECO:0000269" key="4">
    <source>
    </source>
</evidence>
<evidence type="ECO:0000312" key="5">
    <source>
        <dbReference type="EMBL" id="AAD35279.1"/>
    </source>
</evidence>
<evidence type="ECO:0000312" key="6">
    <source>
        <dbReference type="EMBL" id="AGL49110.1"/>
    </source>
</evidence>
<sequence>MTVLIVEDDDITREAMGQYLKLSGFNVIEAENGEKAVELSENVDVALVDVMLPGMSGIEVVNKIKAKNPSCVVFVVTAYDDTEIVKKCVEAGADDFIKKPVNLELLRLKITHALRNRVFHMYRNSYLKSLKKKLFLLEKTAEEFFTEYEDFLFEVLEILNMLSEYRDMETHRHTERVGWLSGRIAEEMGMSEVFVTEIQFAAPLHDIGKIGIPDRILLKPGILTPEEFEIMKQHTTIGFRILSRSNSPILQLGAEIALTHHERWDGSGYPRGLKEREIPISGLIVAVADSFDAMVSRRPYKNPKPLEEAFREIESLSGKLYSPEVVEAFLKLEKEITDVYRREKDEDTSHNGGRSHQSSPGEGVEGIR</sequence>
<dbReference type="EC" id="3.1.4.-" evidence="4"/>
<dbReference type="EMBL" id="AE000512">
    <property type="protein sequence ID" value="AAD35279.1"/>
    <property type="molecule type" value="Genomic_DNA"/>
</dbReference>
<dbReference type="EMBL" id="CP004077">
    <property type="protein sequence ID" value="AGL49110.1"/>
    <property type="molecule type" value="Genomic_DNA"/>
</dbReference>
<dbReference type="PIR" id="E72408">
    <property type="entry name" value="E72408"/>
</dbReference>
<dbReference type="RefSeq" id="NP_228001.1">
    <property type="nucleotide sequence ID" value="NC_000853.1"/>
</dbReference>
<dbReference type="RefSeq" id="WP_004082825.1">
    <property type="nucleotide sequence ID" value="NZ_CP011107.1"/>
</dbReference>
<dbReference type="SMR" id="Q9WY30"/>
<dbReference type="STRING" id="243274.TM_0186"/>
<dbReference type="EnsemblBacteria" id="AAD35279">
    <property type="protein sequence ID" value="AAD35279"/>
    <property type="gene ID" value="TM_0186"/>
</dbReference>
<dbReference type="KEGG" id="tma:TM0186"/>
<dbReference type="KEGG" id="tmm:Tmari_0184"/>
<dbReference type="KEGG" id="tmw:THMA_0187"/>
<dbReference type="PATRIC" id="fig|243274.17.peg.184"/>
<dbReference type="InParanoid" id="Q9WY30"/>
<dbReference type="OrthoDB" id="49429at2"/>
<dbReference type="BRENDA" id="3.1.4.52">
    <property type="organism ID" value="6331"/>
</dbReference>
<dbReference type="Proteomes" id="UP000008183">
    <property type="component" value="Chromosome"/>
</dbReference>
<dbReference type="GO" id="GO:0016787">
    <property type="term" value="F:hydrolase activity"/>
    <property type="evidence" value="ECO:0007669"/>
    <property type="project" value="UniProtKB-KW"/>
</dbReference>
<dbReference type="GO" id="GO:0046872">
    <property type="term" value="F:metal ion binding"/>
    <property type="evidence" value="ECO:0007669"/>
    <property type="project" value="UniProtKB-KW"/>
</dbReference>
<dbReference type="GO" id="GO:0000160">
    <property type="term" value="P:phosphorelay signal transduction system"/>
    <property type="evidence" value="ECO:0007669"/>
    <property type="project" value="InterPro"/>
</dbReference>
<dbReference type="CDD" id="cd00077">
    <property type="entry name" value="HDc"/>
    <property type="match status" value="1"/>
</dbReference>
<dbReference type="CDD" id="cd00156">
    <property type="entry name" value="REC"/>
    <property type="match status" value="1"/>
</dbReference>
<dbReference type="Gene3D" id="3.40.50.2300">
    <property type="match status" value="1"/>
</dbReference>
<dbReference type="Gene3D" id="1.10.3210.10">
    <property type="entry name" value="Hypothetical protein af1432"/>
    <property type="match status" value="1"/>
</dbReference>
<dbReference type="InterPro" id="IPR011006">
    <property type="entry name" value="CheY-like_superfamily"/>
</dbReference>
<dbReference type="InterPro" id="IPR052020">
    <property type="entry name" value="Cyclic_di-GMP/3'3'-cGAMP_PDE"/>
</dbReference>
<dbReference type="InterPro" id="IPR003607">
    <property type="entry name" value="HD/PDEase_dom"/>
</dbReference>
<dbReference type="InterPro" id="IPR037522">
    <property type="entry name" value="HD_GYP_dom"/>
</dbReference>
<dbReference type="InterPro" id="IPR001789">
    <property type="entry name" value="Sig_transdc_resp-reg_receiver"/>
</dbReference>
<dbReference type="PANTHER" id="PTHR45228:SF1">
    <property type="entry name" value="CYCLIC DI-GMP PHOSPHODIESTERASE TM_0186"/>
    <property type="match status" value="1"/>
</dbReference>
<dbReference type="PANTHER" id="PTHR45228">
    <property type="entry name" value="CYCLIC DI-GMP PHOSPHODIESTERASE TM_0186-RELATED"/>
    <property type="match status" value="1"/>
</dbReference>
<dbReference type="Pfam" id="PF13487">
    <property type="entry name" value="HD_5"/>
    <property type="match status" value="1"/>
</dbReference>
<dbReference type="Pfam" id="PF00072">
    <property type="entry name" value="Response_reg"/>
    <property type="match status" value="1"/>
</dbReference>
<dbReference type="SMART" id="SM00471">
    <property type="entry name" value="HDc"/>
    <property type="match status" value="1"/>
</dbReference>
<dbReference type="SMART" id="SM00448">
    <property type="entry name" value="REC"/>
    <property type="match status" value="1"/>
</dbReference>
<dbReference type="SUPFAM" id="SSF52172">
    <property type="entry name" value="CheY-like"/>
    <property type="match status" value="1"/>
</dbReference>
<dbReference type="SUPFAM" id="SSF109604">
    <property type="entry name" value="HD-domain/PDEase-like"/>
    <property type="match status" value="1"/>
</dbReference>
<dbReference type="PROSITE" id="PS51832">
    <property type="entry name" value="HD_GYP"/>
    <property type="match status" value="1"/>
</dbReference>
<dbReference type="PROSITE" id="PS50110">
    <property type="entry name" value="RESPONSE_REGULATORY"/>
    <property type="match status" value="1"/>
</dbReference>
<organism>
    <name type="scientific">Thermotoga maritima (strain ATCC 43589 / DSM 3109 / JCM 10099 / NBRC 100826 / MSB8)</name>
    <dbReference type="NCBI Taxonomy" id="243274"/>
    <lineage>
        <taxon>Bacteria</taxon>
        <taxon>Thermotogati</taxon>
        <taxon>Thermotogota</taxon>
        <taxon>Thermotogae</taxon>
        <taxon>Thermotogales</taxon>
        <taxon>Thermotogaceae</taxon>
        <taxon>Thermotoga</taxon>
    </lineage>
</organism>
<comment type="function">
    <text evidence="4">Phosphodiesterase (PDE) that catalyzes the hydrolysis of cyclic diguanylate (c-di-GMP) to GMP. Hydrolyzes c-di-GMP to GMP in a two-step reaction, via the linear intermediate 5'-phosphoguanylyl(3'-&gt;5')guanosine (pGpG).</text>
</comment>
<comment type="catalytic activity">
    <reaction evidence="4">
        <text>3',3'-c-di-GMP + 2 H2O = 2 GMP + 2 H(+)</text>
        <dbReference type="Rhea" id="RHEA:52928"/>
        <dbReference type="ChEBI" id="CHEBI:15377"/>
        <dbReference type="ChEBI" id="CHEBI:15378"/>
        <dbReference type="ChEBI" id="CHEBI:58115"/>
        <dbReference type="ChEBI" id="CHEBI:58805"/>
    </reaction>
</comment>
<comment type="activity regulation">
    <text evidence="4">Can function in vivo with either divalent iron or manganese occupying di- and trimetal sites. Dimetal is necessary and sufficient to catalyze conversion of c-di-GMP to pGpG, but conversion of pGpG to GMP requires an occupied trimetal site.</text>
</comment>
<name>CDPD_THEMA</name>